<keyword id="KW-0687">Ribonucleoprotein</keyword>
<keyword id="KW-0689">Ribosomal protein</keyword>
<keyword id="KW-0694">RNA-binding</keyword>
<keyword id="KW-0699">rRNA-binding</keyword>
<comment type="function">
    <text evidence="1">One of the primary rRNA binding proteins, this protein initially binds near the 5'-end of the 23S rRNA. It is important during the early stages of 50S assembly. It makes multiple contacts with different domains of the 23S rRNA in the assembled 50S subunit and ribosome.</text>
</comment>
<comment type="function">
    <text evidence="1">Forms part of the polypeptide exit tunnel.</text>
</comment>
<comment type="subunit">
    <text evidence="1">Part of the 50S ribosomal subunit.</text>
</comment>
<comment type="similarity">
    <text evidence="1">Belongs to the universal ribosomal protein uL4 family.</text>
</comment>
<reference key="1">
    <citation type="journal article" date="2008" name="Genome Res.">
        <title>Comparative genome analysis of Salmonella enteritidis PT4 and Salmonella gallinarum 287/91 provides insights into evolutionary and host adaptation pathways.</title>
        <authorList>
            <person name="Thomson N.R."/>
            <person name="Clayton D.J."/>
            <person name="Windhorst D."/>
            <person name="Vernikos G."/>
            <person name="Davidson S."/>
            <person name="Churcher C."/>
            <person name="Quail M.A."/>
            <person name="Stevens M."/>
            <person name="Jones M.A."/>
            <person name="Watson M."/>
            <person name="Barron A."/>
            <person name="Layton A."/>
            <person name="Pickard D."/>
            <person name="Kingsley R.A."/>
            <person name="Bignell A."/>
            <person name="Clark L."/>
            <person name="Harris B."/>
            <person name="Ormond D."/>
            <person name="Abdellah Z."/>
            <person name="Brooks K."/>
            <person name="Cherevach I."/>
            <person name="Chillingworth T."/>
            <person name="Woodward J."/>
            <person name="Norberczak H."/>
            <person name="Lord A."/>
            <person name="Arrowsmith C."/>
            <person name="Jagels K."/>
            <person name="Moule S."/>
            <person name="Mungall K."/>
            <person name="Saunders M."/>
            <person name="Whitehead S."/>
            <person name="Chabalgoity J.A."/>
            <person name="Maskell D."/>
            <person name="Humphreys T."/>
            <person name="Roberts M."/>
            <person name="Barrow P.A."/>
            <person name="Dougan G."/>
            <person name="Parkhill J."/>
        </authorList>
    </citation>
    <scope>NUCLEOTIDE SEQUENCE [LARGE SCALE GENOMIC DNA]</scope>
    <source>
        <strain>287/91 / NCTC 13346</strain>
    </source>
</reference>
<sequence length="201" mass="22087">MELVLKDAQSALTVSETTFGRDFNEALVHQVVVAYAAGARQGTRAQKTRAEVTGSGKKPWRQKGTGRARSGSIKSPIWRSGGVTFAARPQDHSQKVNKKMYRGALKSILSELVRQDRLIVVEKFSVEAPKTKLLAQKLKDMALEDVLIITGELDENLFLAARNLHKVDVRDATGIDPVSLIAFDKVVMTADAVKQVEEMLA</sequence>
<dbReference type="EMBL" id="AM933173">
    <property type="protein sequence ID" value="CAR39770.1"/>
    <property type="molecule type" value="Genomic_DNA"/>
</dbReference>
<dbReference type="RefSeq" id="WP_000424395.1">
    <property type="nucleotide sequence ID" value="NC_011274.1"/>
</dbReference>
<dbReference type="SMR" id="B5RH16"/>
<dbReference type="GeneID" id="97442859"/>
<dbReference type="KEGG" id="seg:SG4000"/>
<dbReference type="HOGENOM" id="CLU_041575_5_2_6"/>
<dbReference type="Proteomes" id="UP000008321">
    <property type="component" value="Chromosome"/>
</dbReference>
<dbReference type="GO" id="GO:1990904">
    <property type="term" value="C:ribonucleoprotein complex"/>
    <property type="evidence" value="ECO:0007669"/>
    <property type="project" value="UniProtKB-KW"/>
</dbReference>
<dbReference type="GO" id="GO:0005840">
    <property type="term" value="C:ribosome"/>
    <property type="evidence" value="ECO:0007669"/>
    <property type="project" value="UniProtKB-KW"/>
</dbReference>
<dbReference type="GO" id="GO:0019843">
    <property type="term" value="F:rRNA binding"/>
    <property type="evidence" value="ECO:0007669"/>
    <property type="project" value="UniProtKB-UniRule"/>
</dbReference>
<dbReference type="GO" id="GO:0003735">
    <property type="term" value="F:structural constituent of ribosome"/>
    <property type="evidence" value="ECO:0007669"/>
    <property type="project" value="InterPro"/>
</dbReference>
<dbReference type="GO" id="GO:0006412">
    <property type="term" value="P:translation"/>
    <property type="evidence" value="ECO:0007669"/>
    <property type="project" value="UniProtKB-UniRule"/>
</dbReference>
<dbReference type="FunFam" id="3.40.1370.10:FF:000001">
    <property type="entry name" value="50S ribosomal protein L4"/>
    <property type="match status" value="1"/>
</dbReference>
<dbReference type="Gene3D" id="3.40.1370.10">
    <property type="match status" value="1"/>
</dbReference>
<dbReference type="HAMAP" id="MF_01328_B">
    <property type="entry name" value="Ribosomal_uL4_B"/>
    <property type="match status" value="1"/>
</dbReference>
<dbReference type="InterPro" id="IPR002136">
    <property type="entry name" value="Ribosomal_uL4"/>
</dbReference>
<dbReference type="InterPro" id="IPR013005">
    <property type="entry name" value="Ribosomal_uL4-like"/>
</dbReference>
<dbReference type="InterPro" id="IPR023574">
    <property type="entry name" value="Ribosomal_uL4_dom_sf"/>
</dbReference>
<dbReference type="NCBIfam" id="TIGR03953">
    <property type="entry name" value="rplD_bact"/>
    <property type="match status" value="1"/>
</dbReference>
<dbReference type="PANTHER" id="PTHR10746">
    <property type="entry name" value="50S RIBOSOMAL PROTEIN L4"/>
    <property type="match status" value="1"/>
</dbReference>
<dbReference type="PANTHER" id="PTHR10746:SF6">
    <property type="entry name" value="LARGE RIBOSOMAL SUBUNIT PROTEIN UL4M"/>
    <property type="match status" value="1"/>
</dbReference>
<dbReference type="Pfam" id="PF00573">
    <property type="entry name" value="Ribosomal_L4"/>
    <property type="match status" value="1"/>
</dbReference>
<dbReference type="SUPFAM" id="SSF52166">
    <property type="entry name" value="Ribosomal protein L4"/>
    <property type="match status" value="1"/>
</dbReference>
<evidence type="ECO:0000255" key="1">
    <source>
        <dbReference type="HAMAP-Rule" id="MF_01328"/>
    </source>
</evidence>
<evidence type="ECO:0000256" key="2">
    <source>
        <dbReference type="SAM" id="MobiDB-lite"/>
    </source>
</evidence>
<evidence type="ECO:0000305" key="3"/>
<gene>
    <name evidence="1" type="primary">rplD</name>
    <name type="ordered locus">SG4000</name>
</gene>
<name>RL4_SALG2</name>
<accession>B5RH16</accession>
<proteinExistence type="inferred from homology"/>
<protein>
    <recommendedName>
        <fullName evidence="1">Large ribosomal subunit protein uL4</fullName>
    </recommendedName>
    <alternativeName>
        <fullName evidence="3">50S ribosomal protein L4</fullName>
    </alternativeName>
</protein>
<feature type="chain" id="PRO_1000142181" description="Large ribosomal subunit protein uL4">
    <location>
        <begin position="1"/>
        <end position="201"/>
    </location>
</feature>
<feature type="region of interest" description="Disordered" evidence="2">
    <location>
        <begin position="44"/>
        <end position="71"/>
    </location>
</feature>
<organism>
    <name type="scientific">Salmonella gallinarum (strain 287/91 / NCTC 13346)</name>
    <dbReference type="NCBI Taxonomy" id="550538"/>
    <lineage>
        <taxon>Bacteria</taxon>
        <taxon>Pseudomonadati</taxon>
        <taxon>Pseudomonadota</taxon>
        <taxon>Gammaproteobacteria</taxon>
        <taxon>Enterobacterales</taxon>
        <taxon>Enterobacteriaceae</taxon>
        <taxon>Salmonella</taxon>
    </lineage>
</organism>